<name>PG20_MYCTO</name>
<comment type="similarity">
    <text evidence="3">Belongs to the mycobacterial PE family. PGRS subfamily.</text>
</comment>
<comment type="sequence caution" evidence="3">
    <conflict type="erroneous initiation">
        <sequence resource="EMBL-CDS" id="AAK45353"/>
    </conflict>
</comment>
<reference key="1">
    <citation type="journal article" date="2002" name="J. Bacteriol.">
        <title>Whole-genome comparison of Mycobacterium tuberculosis clinical and laboratory strains.</title>
        <authorList>
            <person name="Fleischmann R.D."/>
            <person name="Alland D."/>
            <person name="Eisen J.A."/>
            <person name="Carpenter L."/>
            <person name="White O."/>
            <person name="Peterson J.D."/>
            <person name="DeBoy R.T."/>
            <person name="Dodson R.J."/>
            <person name="Gwinn M.L."/>
            <person name="Haft D.H."/>
            <person name="Hickey E.K."/>
            <person name="Kolonay J.F."/>
            <person name="Nelson W.C."/>
            <person name="Umayam L.A."/>
            <person name="Ermolaeva M.D."/>
            <person name="Salzberg S.L."/>
            <person name="Delcher A."/>
            <person name="Utterback T.R."/>
            <person name="Weidman J.F."/>
            <person name="Khouri H.M."/>
            <person name="Gill J."/>
            <person name="Mikula A."/>
            <person name="Bishai W."/>
            <person name="Jacobs W.R. Jr."/>
            <person name="Venter J.C."/>
            <person name="Fraser C.M."/>
        </authorList>
    </citation>
    <scope>NUCLEOTIDE SEQUENCE [LARGE SCALE GENOMIC DNA]</scope>
    <source>
        <strain>CDC 1551 / Oshkosh</strain>
    </source>
</reference>
<proteinExistence type="inferred from homology"/>
<accession>P9WIF8</accession>
<accession>L0T776</accession>
<accession>O53416</accession>
<keyword id="KW-1185">Reference proteome</keyword>
<dbReference type="EMBL" id="AE000516">
    <property type="protein sequence ID" value="AAK45353.1"/>
    <property type="status" value="ALT_INIT"/>
    <property type="molecule type" value="Genomic_DNA"/>
</dbReference>
<dbReference type="PIR" id="B70893">
    <property type="entry name" value="B70893"/>
</dbReference>
<dbReference type="RefSeq" id="WP_031647449.1">
    <property type="nucleotide sequence ID" value="NZ_KK341227.1"/>
</dbReference>
<dbReference type="KEGG" id="mtc:MT1097"/>
<dbReference type="PATRIC" id="fig|83331.31.peg.1181"/>
<dbReference type="HOGENOM" id="CLU_000167_16_7_11"/>
<dbReference type="Proteomes" id="UP000001020">
    <property type="component" value="Chromosome"/>
</dbReference>
<dbReference type="Gene3D" id="1.10.287.850">
    <property type="entry name" value="HP0062-like domain"/>
    <property type="match status" value="1"/>
</dbReference>
<dbReference type="InterPro" id="IPR000084">
    <property type="entry name" value="PE-PGRS_N"/>
</dbReference>
<dbReference type="InterPro" id="IPR048996">
    <property type="entry name" value="PGRS_rpt"/>
</dbReference>
<dbReference type="Pfam" id="PF00934">
    <property type="entry name" value="PE"/>
    <property type="match status" value="1"/>
</dbReference>
<dbReference type="Pfam" id="PF21526">
    <property type="entry name" value="PGRS"/>
    <property type="match status" value="1"/>
</dbReference>
<dbReference type="PRINTS" id="PR01228">
    <property type="entry name" value="EGGSHELL"/>
</dbReference>
<dbReference type="SUPFAM" id="SSF140459">
    <property type="entry name" value="PE/PPE dimer-like"/>
    <property type="match status" value="1"/>
</dbReference>
<sequence>MSYMIAVPDMLSSAAGDLASIGSSINASTRAAAAATTRLLPAAADEVSAHIAALFSGHGEGYQAIARQMAAFHDQFTLALTSSAGAYASAEATNVEQQVLGLINAPTQALLGRPLIGNGADGTAANPNGGAGGLLYGNGGNGFSQTTAGLTGGTGGSAGLIGNGGNGGAGGAGANGGAGGNGGWLYGSGGNGGAGGAGPAGAIGAPGVAGGAGGAGGSAGLFGNGGAGGAGGAGGQGGAGIGGADGTKGGDAGAGGAGGAGGWIHGHGGVGGDGGTGGQGGDGVQGEPGDTGAAGGAGGAGGRGGDGGSAGWLSGNGGDAGTGGGGGNAGNGGNGGSAGWLSGNGGTGGGGGTAGAGGQGGNGNSGIDPGNGGQGADTGNAGNGGHGGSAAKLFGDGGAGGAGGMGSTGGTGGGGGFGGGTGGNGGNGHAGGAGGSGGTAGLLGSGGSGGTGGDGGNGGLGAGSGAKGNGGNGGDGGKGGDAQLIGNGGNGGNGGKGGTGLMPGINGTGGAGGSRGQISGNPGTPGQ</sequence>
<organism>
    <name type="scientific">Mycobacterium tuberculosis (strain CDC 1551 / Oshkosh)</name>
    <dbReference type="NCBI Taxonomy" id="83331"/>
    <lineage>
        <taxon>Bacteria</taxon>
        <taxon>Bacillati</taxon>
        <taxon>Actinomycetota</taxon>
        <taxon>Actinomycetes</taxon>
        <taxon>Mycobacteriales</taxon>
        <taxon>Mycobacteriaceae</taxon>
        <taxon>Mycobacterium</taxon>
        <taxon>Mycobacterium tuberculosis complex</taxon>
    </lineage>
</organism>
<gene>
    <name type="primary">PE_PGRS20</name>
    <name type="ordered locus">MT1097</name>
</gene>
<protein>
    <recommendedName>
        <fullName>Uncharacterized PE-PGRS family protein PE_PGRS20</fullName>
    </recommendedName>
</protein>
<feature type="chain" id="PRO_0000428014" description="Uncharacterized PE-PGRS family protein PE_PGRS20">
    <location>
        <begin position="1"/>
        <end position="527"/>
    </location>
</feature>
<feature type="domain" description="PE" evidence="1">
    <location>
        <begin position="1"/>
        <end position="93"/>
    </location>
</feature>
<feature type="region of interest" description="Disordered" evidence="2">
    <location>
        <begin position="264"/>
        <end position="384"/>
    </location>
</feature>
<feature type="region of interest" description="Disordered" evidence="2">
    <location>
        <begin position="472"/>
        <end position="527"/>
    </location>
</feature>
<feature type="compositionally biased region" description="Gly residues" evidence="2">
    <location>
        <begin position="264"/>
        <end position="286"/>
    </location>
</feature>
<feature type="compositionally biased region" description="Gly residues" evidence="2">
    <location>
        <begin position="292"/>
        <end position="384"/>
    </location>
</feature>
<feature type="compositionally biased region" description="Gly residues" evidence="2">
    <location>
        <begin position="472"/>
        <end position="515"/>
    </location>
</feature>
<evidence type="ECO:0000255" key="1"/>
<evidence type="ECO:0000256" key="2">
    <source>
        <dbReference type="SAM" id="MobiDB-lite"/>
    </source>
</evidence>
<evidence type="ECO:0000305" key="3"/>